<gene>
    <name evidence="1" type="primary">proA</name>
    <name type="ordered locus">M446_4218</name>
</gene>
<name>PROA_METS4</name>
<organism>
    <name type="scientific">Methylobacterium sp. (strain 4-46)</name>
    <dbReference type="NCBI Taxonomy" id="426117"/>
    <lineage>
        <taxon>Bacteria</taxon>
        <taxon>Pseudomonadati</taxon>
        <taxon>Pseudomonadota</taxon>
        <taxon>Alphaproteobacteria</taxon>
        <taxon>Hyphomicrobiales</taxon>
        <taxon>Methylobacteriaceae</taxon>
        <taxon>Methylobacterium</taxon>
    </lineage>
</organism>
<dbReference type="EC" id="1.2.1.41" evidence="1"/>
<dbReference type="EMBL" id="CP000943">
    <property type="protein sequence ID" value="ACA18567.1"/>
    <property type="molecule type" value="Genomic_DNA"/>
</dbReference>
<dbReference type="RefSeq" id="WP_012333958.1">
    <property type="nucleotide sequence ID" value="NC_010511.1"/>
</dbReference>
<dbReference type="SMR" id="B0UMS9"/>
<dbReference type="STRING" id="426117.M446_4218"/>
<dbReference type="KEGG" id="met:M446_4218"/>
<dbReference type="eggNOG" id="COG0014">
    <property type="taxonomic scope" value="Bacteria"/>
</dbReference>
<dbReference type="HOGENOM" id="CLU_030231_0_0_5"/>
<dbReference type="UniPathway" id="UPA00098">
    <property type="reaction ID" value="UER00360"/>
</dbReference>
<dbReference type="GO" id="GO:0005737">
    <property type="term" value="C:cytoplasm"/>
    <property type="evidence" value="ECO:0007669"/>
    <property type="project" value="UniProtKB-SubCell"/>
</dbReference>
<dbReference type="GO" id="GO:0004350">
    <property type="term" value="F:glutamate-5-semialdehyde dehydrogenase activity"/>
    <property type="evidence" value="ECO:0007669"/>
    <property type="project" value="UniProtKB-UniRule"/>
</dbReference>
<dbReference type="GO" id="GO:0050661">
    <property type="term" value="F:NADP binding"/>
    <property type="evidence" value="ECO:0007669"/>
    <property type="project" value="InterPro"/>
</dbReference>
<dbReference type="GO" id="GO:0055129">
    <property type="term" value="P:L-proline biosynthetic process"/>
    <property type="evidence" value="ECO:0007669"/>
    <property type="project" value="UniProtKB-UniRule"/>
</dbReference>
<dbReference type="CDD" id="cd07079">
    <property type="entry name" value="ALDH_F18-19_ProA-GPR"/>
    <property type="match status" value="1"/>
</dbReference>
<dbReference type="FunFam" id="3.40.309.10:FF:000006">
    <property type="entry name" value="Gamma-glutamyl phosphate reductase"/>
    <property type="match status" value="1"/>
</dbReference>
<dbReference type="Gene3D" id="3.40.605.10">
    <property type="entry name" value="Aldehyde Dehydrogenase, Chain A, domain 1"/>
    <property type="match status" value="1"/>
</dbReference>
<dbReference type="Gene3D" id="3.40.309.10">
    <property type="entry name" value="Aldehyde Dehydrogenase, Chain A, domain 2"/>
    <property type="match status" value="1"/>
</dbReference>
<dbReference type="HAMAP" id="MF_00412">
    <property type="entry name" value="ProA"/>
    <property type="match status" value="1"/>
</dbReference>
<dbReference type="InterPro" id="IPR016161">
    <property type="entry name" value="Ald_DH/histidinol_DH"/>
</dbReference>
<dbReference type="InterPro" id="IPR016163">
    <property type="entry name" value="Ald_DH_C"/>
</dbReference>
<dbReference type="InterPro" id="IPR016162">
    <property type="entry name" value="Ald_DH_N"/>
</dbReference>
<dbReference type="InterPro" id="IPR015590">
    <property type="entry name" value="Aldehyde_DH_dom"/>
</dbReference>
<dbReference type="InterPro" id="IPR012134">
    <property type="entry name" value="Glu-5-SA_DH"/>
</dbReference>
<dbReference type="InterPro" id="IPR000965">
    <property type="entry name" value="GPR_dom"/>
</dbReference>
<dbReference type="NCBIfam" id="NF001221">
    <property type="entry name" value="PRK00197.1"/>
    <property type="match status" value="1"/>
</dbReference>
<dbReference type="NCBIfam" id="TIGR00407">
    <property type="entry name" value="proA"/>
    <property type="match status" value="1"/>
</dbReference>
<dbReference type="PANTHER" id="PTHR11063:SF8">
    <property type="entry name" value="DELTA-1-PYRROLINE-5-CARBOXYLATE SYNTHASE"/>
    <property type="match status" value="1"/>
</dbReference>
<dbReference type="PANTHER" id="PTHR11063">
    <property type="entry name" value="GLUTAMATE SEMIALDEHYDE DEHYDROGENASE"/>
    <property type="match status" value="1"/>
</dbReference>
<dbReference type="Pfam" id="PF00171">
    <property type="entry name" value="Aldedh"/>
    <property type="match status" value="1"/>
</dbReference>
<dbReference type="PIRSF" id="PIRSF000151">
    <property type="entry name" value="GPR"/>
    <property type="match status" value="1"/>
</dbReference>
<dbReference type="SUPFAM" id="SSF53720">
    <property type="entry name" value="ALDH-like"/>
    <property type="match status" value="1"/>
</dbReference>
<proteinExistence type="inferred from homology"/>
<sequence length="431" mass="44656">MSVLSLKPRAGADDVDALMREIGRRARAASRRMALVPARAKDMALRAAAAAIRDAAPVILEANAADLAEARGANLPAATLDRLALTPGRVEAIAAAVEAIAGLPDPVGRQLAAFERPNGLAIERISTPLGVVGVIYESRPNVTADAGALCLKAGNAAVLRAGSESLRSAAAIARAMADGLAAQGLPAEAIQLVPTRDRAAVGAMLAGLDGCIDVIVPRGGKSLVARVQSEARVPVFAHLEGICHVFVHARADLAMAREILRNSKLRRTGICGAAETLLVDRACAGTHLAPLVADLLEAGCAVRGDAETQAVDPRVTPATEADWRTEYLDAVIAVRVVDGLDAAIDHVETYGSHHTDAIVTADEAAAERFLAEVDSAIVVHNASTQFADGGEFGFGAEIGIATGRMHARGPVGVEQLTTFKYRVHGSGQVRP</sequence>
<reference key="1">
    <citation type="submission" date="2008-02" db="EMBL/GenBank/DDBJ databases">
        <title>Complete sequence of chromosome of Methylobacterium sp. 4-46.</title>
        <authorList>
            <consortium name="US DOE Joint Genome Institute"/>
            <person name="Copeland A."/>
            <person name="Lucas S."/>
            <person name="Lapidus A."/>
            <person name="Glavina del Rio T."/>
            <person name="Dalin E."/>
            <person name="Tice H."/>
            <person name="Bruce D."/>
            <person name="Goodwin L."/>
            <person name="Pitluck S."/>
            <person name="Chertkov O."/>
            <person name="Brettin T."/>
            <person name="Detter J.C."/>
            <person name="Han C."/>
            <person name="Kuske C.R."/>
            <person name="Schmutz J."/>
            <person name="Larimer F."/>
            <person name="Land M."/>
            <person name="Hauser L."/>
            <person name="Kyrpides N."/>
            <person name="Ivanova N."/>
            <person name="Marx C.J."/>
            <person name="Richardson P."/>
        </authorList>
    </citation>
    <scope>NUCLEOTIDE SEQUENCE [LARGE SCALE GENOMIC DNA]</scope>
    <source>
        <strain>4-46</strain>
    </source>
</reference>
<evidence type="ECO:0000255" key="1">
    <source>
        <dbReference type="HAMAP-Rule" id="MF_00412"/>
    </source>
</evidence>
<protein>
    <recommendedName>
        <fullName evidence="1">Gamma-glutamyl phosphate reductase</fullName>
        <shortName evidence="1">GPR</shortName>
        <ecNumber evidence="1">1.2.1.41</ecNumber>
    </recommendedName>
    <alternativeName>
        <fullName evidence="1">Glutamate-5-semialdehyde dehydrogenase</fullName>
    </alternativeName>
    <alternativeName>
        <fullName evidence="1">Glutamyl-gamma-semialdehyde dehydrogenase</fullName>
        <shortName evidence="1">GSA dehydrogenase</shortName>
    </alternativeName>
</protein>
<feature type="chain" id="PRO_0000340895" description="Gamma-glutamyl phosphate reductase">
    <location>
        <begin position="1"/>
        <end position="431"/>
    </location>
</feature>
<comment type="function">
    <text evidence="1">Catalyzes the NADPH-dependent reduction of L-glutamate 5-phosphate into L-glutamate 5-semialdehyde and phosphate. The product spontaneously undergoes cyclization to form 1-pyrroline-5-carboxylate.</text>
</comment>
<comment type="catalytic activity">
    <reaction evidence="1">
        <text>L-glutamate 5-semialdehyde + phosphate + NADP(+) = L-glutamyl 5-phosphate + NADPH + H(+)</text>
        <dbReference type="Rhea" id="RHEA:19541"/>
        <dbReference type="ChEBI" id="CHEBI:15378"/>
        <dbReference type="ChEBI" id="CHEBI:43474"/>
        <dbReference type="ChEBI" id="CHEBI:57783"/>
        <dbReference type="ChEBI" id="CHEBI:58066"/>
        <dbReference type="ChEBI" id="CHEBI:58274"/>
        <dbReference type="ChEBI" id="CHEBI:58349"/>
        <dbReference type="EC" id="1.2.1.41"/>
    </reaction>
</comment>
<comment type="pathway">
    <text evidence="1">Amino-acid biosynthesis; L-proline biosynthesis; L-glutamate 5-semialdehyde from L-glutamate: step 2/2.</text>
</comment>
<comment type="subcellular location">
    <subcellularLocation>
        <location evidence="1">Cytoplasm</location>
    </subcellularLocation>
</comment>
<comment type="similarity">
    <text evidence="1">Belongs to the gamma-glutamyl phosphate reductase family.</text>
</comment>
<accession>B0UMS9</accession>
<keyword id="KW-0028">Amino-acid biosynthesis</keyword>
<keyword id="KW-0963">Cytoplasm</keyword>
<keyword id="KW-0521">NADP</keyword>
<keyword id="KW-0560">Oxidoreductase</keyword>
<keyword id="KW-0641">Proline biosynthesis</keyword>